<name>YCIB_ECOL6</name>
<comment type="function">
    <text evidence="1">Plays a role in cell envelope biogenesis, maintenance of cell envelope integrity and membrane homeostasis.</text>
</comment>
<comment type="subcellular location">
    <subcellularLocation>
        <location evidence="1">Cell inner membrane</location>
        <topology evidence="1">Multi-pass membrane protein</topology>
    </subcellularLocation>
</comment>
<comment type="similarity">
    <text evidence="1">Belongs to the YciB family.</text>
</comment>
<organism>
    <name type="scientific">Escherichia coli O6:H1 (strain CFT073 / ATCC 700928 / UPEC)</name>
    <dbReference type="NCBI Taxonomy" id="199310"/>
    <lineage>
        <taxon>Bacteria</taxon>
        <taxon>Pseudomonadati</taxon>
        <taxon>Pseudomonadota</taxon>
        <taxon>Gammaproteobacteria</taxon>
        <taxon>Enterobacterales</taxon>
        <taxon>Enterobacteriaceae</taxon>
        <taxon>Escherichia</taxon>
    </lineage>
</organism>
<accession>P59440</accession>
<keyword id="KW-0997">Cell inner membrane</keyword>
<keyword id="KW-1003">Cell membrane</keyword>
<keyword id="KW-0472">Membrane</keyword>
<keyword id="KW-1185">Reference proteome</keyword>
<keyword id="KW-0812">Transmembrane</keyword>
<keyword id="KW-1133">Transmembrane helix</keyword>
<reference key="1">
    <citation type="journal article" date="2002" name="Proc. Natl. Acad. Sci. U.S.A.">
        <title>Extensive mosaic structure revealed by the complete genome sequence of uropathogenic Escherichia coli.</title>
        <authorList>
            <person name="Welch R.A."/>
            <person name="Burland V."/>
            <person name="Plunkett G. III"/>
            <person name="Redford P."/>
            <person name="Roesch P."/>
            <person name="Rasko D."/>
            <person name="Buckles E.L."/>
            <person name="Liou S.-R."/>
            <person name="Boutin A."/>
            <person name="Hackett J."/>
            <person name="Stroud D."/>
            <person name="Mayhew G.F."/>
            <person name="Rose D.J."/>
            <person name="Zhou S."/>
            <person name="Schwartz D.C."/>
            <person name="Perna N.T."/>
            <person name="Mobley H.L.T."/>
            <person name="Donnenberg M.S."/>
            <person name="Blattner F.R."/>
        </authorList>
    </citation>
    <scope>NUCLEOTIDE SEQUENCE [LARGE SCALE GENOMIC DNA]</scope>
    <source>
        <strain>CFT073 / ATCC 700928 / UPEC</strain>
    </source>
</reference>
<proteinExistence type="inferred from homology"/>
<protein>
    <recommendedName>
        <fullName evidence="1">Inner membrane-spanning protein YciB</fullName>
    </recommendedName>
</protein>
<feature type="chain" id="PRO_0000206533" description="Inner membrane-spanning protein YciB">
    <location>
        <begin position="1"/>
        <end position="179"/>
    </location>
</feature>
<feature type="transmembrane region" description="Helical" evidence="1">
    <location>
        <begin position="22"/>
        <end position="42"/>
    </location>
</feature>
<feature type="transmembrane region" description="Helical" evidence="1">
    <location>
        <begin position="50"/>
        <end position="70"/>
    </location>
</feature>
<feature type="transmembrane region" description="Helical" evidence="1">
    <location>
        <begin position="76"/>
        <end position="96"/>
    </location>
</feature>
<feature type="transmembrane region" description="Helical" evidence="1">
    <location>
        <begin position="121"/>
        <end position="141"/>
    </location>
</feature>
<feature type="transmembrane region" description="Helical" evidence="1">
    <location>
        <begin position="149"/>
        <end position="169"/>
    </location>
</feature>
<gene>
    <name evidence="1" type="primary">yciB</name>
    <name type="ordered locus">c1720</name>
</gene>
<sequence length="179" mass="20780">MKQFLDFLPLVVFFAFYKIYDIYAATAALIVATAIVLIYSWVRFRKVEKMALITFVLVVVFGGLTLFFHNDEFIKWKVTVIYALFAGALLVSQWVMKKPLIQRMLGKELTLPQSVWSKLNLAWAVFFILCGLANIYIAFWLPQNIWVNFKVFGLTALTLIFTLLSGIYIYRHMPQEDKS</sequence>
<dbReference type="EMBL" id="AE014075">
    <property type="protein sequence ID" value="AAN80187.1"/>
    <property type="molecule type" value="Genomic_DNA"/>
</dbReference>
<dbReference type="RefSeq" id="WP_000808672.1">
    <property type="nucleotide sequence ID" value="NZ_CP051263.1"/>
</dbReference>
<dbReference type="STRING" id="199310.c1720"/>
<dbReference type="KEGG" id="ecc:c1720"/>
<dbReference type="eggNOG" id="COG2917">
    <property type="taxonomic scope" value="Bacteria"/>
</dbReference>
<dbReference type="HOGENOM" id="CLU_089554_2_0_6"/>
<dbReference type="BioCyc" id="ECOL199310:C1720-MONOMER"/>
<dbReference type="Proteomes" id="UP000001410">
    <property type="component" value="Chromosome"/>
</dbReference>
<dbReference type="GO" id="GO:0005886">
    <property type="term" value="C:plasma membrane"/>
    <property type="evidence" value="ECO:0007669"/>
    <property type="project" value="UniProtKB-SubCell"/>
</dbReference>
<dbReference type="HAMAP" id="MF_00189">
    <property type="entry name" value="YciB"/>
    <property type="match status" value="1"/>
</dbReference>
<dbReference type="InterPro" id="IPR006008">
    <property type="entry name" value="YciB"/>
</dbReference>
<dbReference type="NCBIfam" id="TIGR00997">
    <property type="entry name" value="ispZ"/>
    <property type="match status" value="1"/>
</dbReference>
<dbReference type="NCBIfam" id="NF001324">
    <property type="entry name" value="PRK00259.1-2"/>
    <property type="match status" value="1"/>
</dbReference>
<dbReference type="NCBIfam" id="NF001325">
    <property type="entry name" value="PRK00259.1-3"/>
    <property type="match status" value="1"/>
</dbReference>
<dbReference type="NCBIfam" id="NF001326">
    <property type="entry name" value="PRK00259.1-4"/>
    <property type="match status" value="1"/>
</dbReference>
<dbReference type="PANTHER" id="PTHR36917:SF1">
    <property type="entry name" value="INNER MEMBRANE-SPANNING PROTEIN YCIB"/>
    <property type="match status" value="1"/>
</dbReference>
<dbReference type="PANTHER" id="PTHR36917">
    <property type="entry name" value="INTRACELLULAR SEPTATION PROTEIN A-RELATED"/>
    <property type="match status" value="1"/>
</dbReference>
<dbReference type="Pfam" id="PF04279">
    <property type="entry name" value="IspA"/>
    <property type="match status" value="1"/>
</dbReference>
<evidence type="ECO:0000255" key="1">
    <source>
        <dbReference type="HAMAP-Rule" id="MF_00189"/>
    </source>
</evidence>